<organism>
    <name type="scientific">Pseudomonas aeruginosa (strain ATCC 15692 / DSM 22644 / CIP 104116 / JCM 14847 / LMG 12228 / 1C / PRS 101 / PAO1)</name>
    <dbReference type="NCBI Taxonomy" id="208964"/>
    <lineage>
        <taxon>Bacteria</taxon>
        <taxon>Pseudomonadati</taxon>
        <taxon>Pseudomonadota</taxon>
        <taxon>Gammaproteobacteria</taxon>
        <taxon>Pseudomonadales</taxon>
        <taxon>Pseudomonadaceae</taxon>
        <taxon>Pseudomonas</taxon>
    </lineage>
</organism>
<proteinExistence type="inferred from homology"/>
<accession>Q9HXG4</accession>
<evidence type="ECO:0000255" key="1">
    <source>
        <dbReference type="HAMAP-Rule" id="MF_01848"/>
    </source>
</evidence>
<evidence type="ECO:0000256" key="2">
    <source>
        <dbReference type="SAM" id="MobiDB-lite"/>
    </source>
</evidence>
<dbReference type="EC" id="2.1.1.181" evidence="1"/>
<dbReference type="EMBL" id="AE004091">
    <property type="protein sequence ID" value="AAG07227.1"/>
    <property type="molecule type" value="Genomic_DNA"/>
</dbReference>
<dbReference type="PIR" id="A83166">
    <property type="entry name" value="A83166"/>
</dbReference>
<dbReference type="RefSeq" id="NP_252529.1">
    <property type="nucleotide sequence ID" value="NC_002516.2"/>
</dbReference>
<dbReference type="RefSeq" id="WP_003092887.1">
    <property type="nucleotide sequence ID" value="NZ_QZGE01000001.1"/>
</dbReference>
<dbReference type="SMR" id="Q9HXG4"/>
<dbReference type="FunCoup" id="Q9HXG4">
    <property type="interactions" value="368"/>
</dbReference>
<dbReference type="STRING" id="208964.PA3840"/>
<dbReference type="PaxDb" id="208964-PA3840"/>
<dbReference type="DNASU" id="879836"/>
<dbReference type="GeneID" id="879836"/>
<dbReference type="KEGG" id="pae:PA3840"/>
<dbReference type="PATRIC" id="fig|208964.12.peg.4020"/>
<dbReference type="PseudoCAP" id="PA3840"/>
<dbReference type="HOGENOM" id="CLU_027534_3_0_6"/>
<dbReference type="InParanoid" id="Q9HXG4"/>
<dbReference type="OrthoDB" id="1115728at2"/>
<dbReference type="PhylomeDB" id="Q9HXG4"/>
<dbReference type="BioCyc" id="PAER208964:G1FZ6-3912-MONOMER"/>
<dbReference type="Proteomes" id="UP000002438">
    <property type="component" value="Chromosome"/>
</dbReference>
<dbReference type="GO" id="GO:0005737">
    <property type="term" value="C:cytoplasm"/>
    <property type="evidence" value="ECO:0007669"/>
    <property type="project" value="UniProtKB-SubCell"/>
</dbReference>
<dbReference type="GO" id="GO:0052907">
    <property type="term" value="F:23S rRNA (adenine(1618)-N(6))-methyltransferase activity"/>
    <property type="evidence" value="ECO:0000318"/>
    <property type="project" value="GO_Central"/>
</dbReference>
<dbReference type="GO" id="GO:0070475">
    <property type="term" value="P:rRNA base methylation"/>
    <property type="evidence" value="ECO:0000318"/>
    <property type="project" value="GO_Central"/>
</dbReference>
<dbReference type="CDD" id="cd02440">
    <property type="entry name" value="AdoMet_MTases"/>
    <property type="match status" value="1"/>
</dbReference>
<dbReference type="FunFam" id="3.40.50.150:FF:000045">
    <property type="entry name" value="Ribosomal RNA large subunit methyltransferase F"/>
    <property type="match status" value="1"/>
</dbReference>
<dbReference type="Gene3D" id="3.40.50.150">
    <property type="entry name" value="Vaccinia Virus protein VP39"/>
    <property type="match status" value="1"/>
</dbReference>
<dbReference type="HAMAP" id="MF_01848">
    <property type="entry name" value="23SrRNA_methyltr_F"/>
    <property type="match status" value="1"/>
</dbReference>
<dbReference type="InterPro" id="IPR010286">
    <property type="entry name" value="METTL16/RlmF"/>
</dbReference>
<dbReference type="InterPro" id="IPR016909">
    <property type="entry name" value="rRNA_lsu_MeTfrase_F"/>
</dbReference>
<dbReference type="InterPro" id="IPR029063">
    <property type="entry name" value="SAM-dependent_MTases_sf"/>
</dbReference>
<dbReference type="NCBIfam" id="NF008725">
    <property type="entry name" value="PRK11727.1"/>
    <property type="match status" value="1"/>
</dbReference>
<dbReference type="PANTHER" id="PTHR13393:SF0">
    <property type="entry name" value="RNA N6-ADENOSINE-METHYLTRANSFERASE METTL16"/>
    <property type="match status" value="1"/>
</dbReference>
<dbReference type="PANTHER" id="PTHR13393">
    <property type="entry name" value="SAM-DEPENDENT METHYLTRANSFERASE"/>
    <property type="match status" value="1"/>
</dbReference>
<dbReference type="Pfam" id="PF05971">
    <property type="entry name" value="Methyltransf_10"/>
    <property type="match status" value="1"/>
</dbReference>
<dbReference type="PIRSF" id="PIRSF029038">
    <property type="entry name" value="Mtase_YbiN_prd"/>
    <property type="match status" value="1"/>
</dbReference>
<dbReference type="SUPFAM" id="SSF53335">
    <property type="entry name" value="S-adenosyl-L-methionine-dependent methyltransferases"/>
    <property type="match status" value="1"/>
</dbReference>
<feature type="chain" id="PRO_0000349925" description="Ribosomal RNA large subunit methyltransferase F">
    <location>
        <begin position="1"/>
        <end position="336"/>
    </location>
</feature>
<feature type="region of interest" description="Disordered" evidence="2">
    <location>
        <begin position="1"/>
        <end position="24"/>
    </location>
</feature>
<protein>
    <recommendedName>
        <fullName evidence="1">Ribosomal RNA large subunit methyltransferase F</fullName>
        <ecNumber evidence="1">2.1.1.181</ecNumber>
    </recommendedName>
    <alternativeName>
        <fullName evidence="1">23S rRNA mA1618 methyltransferase</fullName>
    </alternativeName>
    <alternativeName>
        <fullName evidence="1">rRNA adenine N-6-methyltransferase</fullName>
    </alternativeName>
</protein>
<name>RLMF_PSEAE</name>
<sequence length="336" mass="37629">MPRPTSPHPDAERKSASPLHPRNRHLGRYDFPRLIAGSPELERFVILNPYGRQSIDFADPAAVKAFNRALLQQFYDVREWDIPDGYLCPPIPGRADYLHYLADLLGASHDGLIPRGPGLRALDVGTGANCIYPLLGHHEYGWRFVGADIDPQSLASAAAILAANPRFAAAIELRRQPDRRQIFQGLIGVDERFDMTLCNPPFHASLDEATRGSRRKWKNLGKLDPTRTLPLLNFGGQGAELYCEGGEAAFLAGMAEESRAFATQVFWFTTLVSKASNLPNLQERLKTLGASDIRVVDMAQGQKQSRFVAWTYLDKKQRRAWRKERWTAALLEPLGE</sequence>
<reference key="1">
    <citation type="journal article" date="2000" name="Nature">
        <title>Complete genome sequence of Pseudomonas aeruginosa PAO1, an opportunistic pathogen.</title>
        <authorList>
            <person name="Stover C.K."/>
            <person name="Pham X.-Q.T."/>
            <person name="Erwin A.L."/>
            <person name="Mizoguchi S.D."/>
            <person name="Warrener P."/>
            <person name="Hickey M.J."/>
            <person name="Brinkman F.S.L."/>
            <person name="Hufnagle W.O."/>
            <person name="Kowalik D.J."/>
            <person name="Lagrou M."/>
            <person name="Garber R.L."/>
            <person name="Goltry L."/>
            <person name="Tolentino E."/>
            <person name="Westbrock-Wadman S."/>
            <person name="Yuan Y."/>
            <person name="Brody L.L."/>
            <person name="Coulter S.N."/>
            <person name="Folger K.R."/>
            <person name="Kas A."/>
            <person name="Larbig K."/>
            <person name="Lim R.M."/>
            <person name="Smith K.A."/>
            <person name="Spencer D.H."/>
            <person name="Wong G.K.-S."/>
            <person name="Wu Z."/>
            <person name="Paulsen I.T."/>
            <person name="Reizer J."/>
            <person name="Saier M.H. Jr."/>
            <person name="Hancock R.E.W."/>
            <person name="Lory S."/>
            <person name="Olson M.V."/>
        </authorList>
    </citation>
    <scope>NUCLEOTIDE SEQUENCE [LARGE SCALE GENOMIC DNA]</scope>
    <source>
        <strain>ATCC 15692 / DSM 22644 / CIP 104116 / JCM 14847 / LMG 12228 / 1C / PRS 101 / PAO1</strain>
    </source>
</reference>
<gene>
    <name evidence="1" type="primary">rlmF</name>
    <name type="ordered locus">PA3840</name>
</gene>
<keyword id="KW-0963">Cytoplasm</keyword>
<keyword id="KW-0489">Methyltransferase</keyword>
<keyword id="KW-1185">Reference proteome</keyword>
<keyword id="KW-0698">rRNA processing</keyword>
<keyword id="KW-0949">S-adenosyl-L-methionine</keyword>
<keyword id="KW-0808">Transferase</keyword>
<comment type="function">
    <text evidence="1">Specifically methylates the adenine in position 1618 of 23S rRNA.</text>
</comment>
<comment type="catalytic activity">
    <reaction evidence="1">
        <text>adenosine(1618) in 23S rRNA + S-adenosyl-L-methionine = N(6)-methyladenosine(1618) in 23S rRNA + S-adenosyl-L-homocysteine + H(+)</text>
        <dbReference type="Rhea" id="RHEA:16497"/>
        <dbReference type="Rhea" id="RHEA-COMP:10229"/>
        <dbReference type="Rhea" id="RHEA-COMP:10231"/>
        <dbReference type="ChEBI" id="CHEBI:15378"/>
        <dbReference type="ChEBI" id="CHEBI:57856"/>
        <dbReference type="ChEBI" id="CHEBI:59789"/>
        <dbReference type="ChEBI" id="CHEBI:74411"/>
        <dbReference type="ChEBI" id="CHEBI:74449"/>
        <dbReference type="EC" id="2.1.1.181"/>
    </reaction>
</comment>
<comment type="subcellular location">
    <subcellularLocation>
        <location evidence="1">Cytoplasm</location>
    </subcellularLocation>
</comment>
<comment type="similarity">
    <text evidence="1">Belongs to the methyltransferase superfamily. METTL16/RlmF family.</text>
</comment>